<dbReference type="EMBL" id="CP000511">
    <property type="protein sequence ID" value="ABM12113.1"/>
    <property type="molecule type" value="Genomic_DNA"/>
</dbReference>
<dbReference type="RefSeq" id="WP_003929602.1">
    <property type="nucleotide sequence ID" value="NZ_JACKSD010000069.1"/>
</dbReference>
<dbReference type="SMR" id="A1T4L3"/>
<dbReference type="STRING" id="350058.Mvan_1279"/>
<dbReference type="GeneID" id="93380789"/>
<dbReference type="KEGG" id="mva:Mvan_1279"/>
<dbReference type="eggNOG" id="COG0048">
    <property type="taxonomic scope" value="Bacteria"/>
</dbReference>
<dbReference type="HOGENOM" id="CLU_104295_1_2_11"/>
<dbReference type="Proteomes" id="UP000009159">
    <property type="component" value="Chromosome"/>
</dbReference>
<dbReference type="GO" id="GO:0015935">
    <property type="term" value="C:small ribosomal subunit"/>
    <property type="evidence" value="ECO:0007669"/>
    <property type="project" value="InterPro"/>
</dbReference>
<dbReference type="GO" id="GO:0019843">
    <property type="term" value="F:rRNA binding"/>
    <property type="evidence" value="ECO:0007669"/>
    <property type="project" value="UniProtKB-UniRule"/>
</dbReference>
<dbReference type="GO" id="GO:0003735">
    <property type="term" value="F:structural constituent of ribosome"/>
    <property type="evidence" value="ECO:0007669"/>
    <property type="project" value="InterPro"/>
</dbReference>
<dbReference type="GO" id="GO:0000049">
    <property type="term" value="F:tRNA binding"/>
    <property type="evidence" value="ECO:0007669"/>
    <property type="project" value="UniProtKB-UniRule"/>
</dbReference>
<dbReference type="GO" id="GO:0006412">
    <property type="term" value="P:translation"/>
    <property type="evidence" value="ECO:0007669"/>
    <property type="project" value="UniProtKB-UniRule"/>
</dbReference>
<dbReference type="CDD" id="cd03368">
    <property type="entry name" value="Ribosomal_S12"/>
    <property type="match status" value="1"/>
</dbReference>
<dbReference type="FunFam" id="2.40.50.140:FF:000001">
    <property type="entry name" value="30S ribosomal protein S12"/>
    <property type="match status" value="1"/>
</dbReference>
<dbReference type="Gene3D" id="2.40.50.140">
    <property type="entry name" value="Nucleic acid-binding proteins"/>
    <property type="match status" value="1"/>
</dbReference>
<dbReference type="HAMAP" id="MF_00403_B">
    <property type="entry name" value="Ribosomal_uS12_B"/>
    <property type="match status" value="1"/>
</dbReference>
<dbReference type="InterPro" id="IPR012340">
    <property type="entry name" value="NA-bd_OB-fold"/>
</dbReference>
<dbReference type="InterPro" id="IPR006032">
    <property type="entry name" value="Ribosomal_uS12"/>
</dbReference>
<dbReference type="InterPro" id="IPR005679">
    <property type="entry name" value="Ribosomal_uS12_bac"/>
</dbReference>
<dbReference type="NCBIfam" id="TIGR00981">
    <property type="entry name" value="rpsL_bact"/>
    <property type="match status" value="1"/>
</dbReference>
<dbReference type="PANTHER" id="PTHR11652">
    <property type="entry name" value="30S RIBOSOMAL PROTEIN S12 FAMILY MEMBER"/>
    <property type="match status" value="1"/>
</dbReference>
<dbReference type="Pfam" id="PF00164">
    <property type="entry name" value="Ribosom_S12_S23"/>
    <property type="match status" value="1"/>
</dbReference>
<dbReference type="PIRSF" id="PIRSF002133">
    <property type="entry name" value="Ribosomal_S12/S23"/>
    <property type="match status" value="1"/>
</dbReference>
<dbReference type="PRINTS" id="PR01034">
    <property type="entry name" value="RIBOSOMALS12"/>
</dbReference>
<dbReference type="SUPFAM" id="SSF50249">
    <property type="entry name" value="Nucleic acid-binding proteins"/>
    <property type="match status" value="1"/>
</dbReference>
<dbReference type="PROSITE" id="PS00055">
    <property type="entry name" value="RIBOSOMAL_S12"/>
    <property type="match status" value="1"/>
</dbReference>
<name>RS12_MYCVP</name>
<protein>
    <recommendedName>
        <fullName evidence="2">Small ribosomal subunit protein uS12</fullName>
    </recommendedName>
    <alternativeName>
        <fullName evidence="4">30S ribosomal protein S12</fullName>
    </alternativeName>
</protein>
<reference key="1">
    <citation type="submission" date="2006-12" db="EMBL/GenBank/DDBJ databases">
        <title>Complete sequence of Mycobacterium vanbaalenii PYR-1.</title>
        <authorList>
            <consortium name="US DOE Joint Genome Institute"/>
            <person name="Copeland A."/>
            <person name="Lucas S."/>
            <person name="Lapidus A."/>
            <person name="Barry K."/>
            <person name="Detter J.C."/>
            <person name="Glavina del Rio T."/>
            <person name="Hammon N."/>
            <person name="Israni S."/>
            <person name="Dalin E."/>
            <person name="Tice H."/>
            <person name="Pitluck S."/>
            <person name="Singan V."/>
            <person name="Schmutz J."/>
            <person name="Larimer F."/>
            <person name="Land M."/>
            <person name="Hauser L."/>
            <person name="Kyrpides N."/>
            <person name="Anderson I.J."/>
            <person name="Miller C."/>
            <person name="Richardson P."/>
        </authorList>
    </citation>
    <scope>NUCLEOTIDE SEQUENCE [LARGE SCALE GENOMIC DNA]</scope>
    <source>
        <strain>DSM 7251 / JCM 13017 / BCRC 16820 / KCTC 9966 / NRRL B-24157 / PYR-1</strain>
    </source>
</reference>
<evidence type="ECO:0000250" key="1"/>
<evidence type="ECO:0000255" key="2">
    <source>
        <dbReference type="HAMAP-Rule" id="MF_00403"/>
    </source>
</evidence>
<evidence type="ECO:0000256" key="3">
    <source>
        <dbReference type="SAM" id="MobiDB-lite"/>
    </source>
</evidence>
<evidence type="ECO:0000305" key="4"/>
<organism>
    <name type="scientific">Mycolicibacterium vanbaalenii (strain DSM 7251 / JCM 13017 / BCRC 16820 / KCTC 9966 / NRRL B-24157 / PYR-1)</name>
    <name type="common">Mycobacterium vanbaalenii</name>
    <dbReference type="NCBI Taxonomy" id="350058"/>
    <lineage>
        <taxon>Bacteria</taxon>
        <taxon>Bacillati</taxon>
        <taxon>Actinomycetota</taxon>
        <taxon>Actinomycetes</taxon>
        <taxon>Mycobacteriales</taxon>
        <taxon>Mycobacteriaceae</taxon>
        <taxon>Mycolicibacterium</taxon>
    </lineage>
</organism>
<accession>A1T4L3</accession>
<comment type="function">
    <text evidence="2">With S4 and S5 plays an important role in translational accuracy.</text>
</comment>
<comment type="function">
    <text evidence="2">Interacts with and stabilizes bases of the 16S rRNA that are involved in tRNA selection in the A site and with the mRNA backbone. Located at the interface of the 30S and 50S subunits, it traverses the body of the 30S subunit contacting proteins on the other side and probably holding the rRNA structure together. The combined cluster of proteins S8, S12 and S17 appears to hold together the shoulder and platform of the 30S subunit.</text>
</comment>
<comment type="subunit">
    <text evidence="2">Part of the 30S ribosomal subunit. Contacts proteins S8 and S17. May interact with IF1 in the 30S initiation complex.</text>
</comment>
<comment type="similarity">
    <text evidence="2">Belongs to the universal ribosomal protein uS12 family.</text>
</comment>
<proteinExistence type="inferred from homology"/>
<keyword id="KW-0488">Methylation</keyword>
<keyword id="KW-0687">Ribonucleoprotein</keyword>
<keyword id="KW-0689">Ribosomal protein</keyword>
<keyword id="KW-0694">RNA-binding</keyword>
<keyword id="KW-0699">rRNA-binding</keyword>
<keyword id="KW-0820">tRNA-binding</keyword>
<sequence>MPTINQLVRKGRRDKIAKVKTAALKGSPQRRGVCTRVYTTTPKKPNSALRKVARVRLTSAVEVTAYIPGEGHNLQEHSMVLVRGGRVKDLPGVRYKIIRGSLDTQGVKNRKQARSRYGAKKEKS</sequence>
<feature type="chain" id="PRO_0000296004" description="Small ribosomal subunit protein uS12">
    <location>
        <begin position="1"/>
        <end position="124"/>
    </location>
</feature>
<feature type="region of interest" description="Disordered" evidence="3">
    <location>
        <begin position="105"/>
        <end position="124"/>
    </location>
</feature>
<feature type="compositionally biased region" description="Basic residues" evidence="3">
    <location>
        <begin position="108"/>
        <end position="118"/>
    </location>
</feature>
<feature type="modified residue" description="3-methylthioaspartic acid" evidence="1">
    <location>
        <position position="89"/>
    </location>
</feature>
<gene>
    <name evidence="2" type="primary">rpsL</name>
    <name type="ordered locus">Mvan_1279</name>
</gene>